<protein>
    <recommendedName>
        <fullName>D-alanyl-D-alanine carboxypeptidase DacA</fullName>
        <shortName>DD-carboxypeptidase</shortName>
        <shortName>DD-peptidase</shortName>
        <ecNumber>3.4.16.4</ecNumber>
    </recommendedName>
    <alternativeName>
        <fullName>Beta-lactamase</fullName>
        <ecNumber>3.5.2.6</ecNumber>
    </alternativeName>
    <alternativeName>
        <fullName>Penicillin-binding protein 5</fullName>
        <shortName>PBP-5</shortName>
    </alternativeName>
</protein>
<proteinExistence type="evidence at protein level"/>
<sequence length="403" mass="44444">MNTIFSARIMKRLALTTALCTAFISAAHADDLNIKTMIPGVPQIDAESYILIDYNSGKVLAEQNADVRRDPASLTKMMTSYVIGQAMKAGKFKETDLVTIGNDAWATGNPVFKGSSLMFLKPGMQVPVSQLIRGINLQSGNDACVAMADFAAGSQDAFVGLMNSYVNALGLKNTHFQTVHGLDADGQYSSARDMALIGQALIRDVPNEYSIYKEKEFTFNGIRQLNRNGLLWDNSLNVDGIKTGHTDKAGYNLVASATEGQMRLISAVMGGRTFKGREAESKKLLTWGFRFFETVNPLKVGKEFASEPVWFGDSDRASLGVDKDVYLTIPRGRMKDLKASYVLNSSELHAPLQKNQVVGTINFQLDGKTIEQRPLVVLQEIPEGNFFGKIIDYIKLMFHHWFG</sequence>
<accession>P0AEB2</accession>
<accession>P04287</accession>
<accession>P77106</accession>
<name>DACA_ECOLI</name>
<feature type="signal peptide" evidence="3">
    <location>
        <begin position="1"/>
        <end position="29"/>
    </location>
</feature>
<feature type="chain" id="PRO_0000027231" description="D-alanyl-D-alanine carboxypeptidase DacA">
    <location>
        <begin position="30"/>
        <end position="403"/>
    </location>
</feature>
<feature type="active site" description="Acyl-ester intermediate">
    <location>
        <position position="73"/>
    </location>
</feature>
<feature type="active site" description="Proton acceptor">
    <location>
        <position position="76"/>
    </location>
</feature>
<feature type="active site">
    <location>
        <position position="139"/>
    </location>
</feature>
<feature type="binding site">
    <location>
        <position position="242"/>
    </location>
    <ligand>
        <name>substrate</name>
    </ligand>
</feature>
<feature type="sequence variant" description="In mutant dacA11191; inactive but still binds penicillin. Blocked in the release of the bound penicilloyl moiety; the mutant also fails to catalyze the D-alanine carboxypeptidase reaction as the hydrolysis of the acyl-enzyme formed with substrate is also blocked and the acyl-enzyme accumulates.">
    <original>G</original>
    <variation>D</variation>
    <location>
        <position position="134"/>
    </location>
</feature>
<feature type="mutagenesis site" description="Complete loss of enzyme activity. No effect on penicillin binding." evidence="1">
    <location>
        <begin position="101"/>
        <end position="121"/>
    </location>
</feature>
<feature type="mutagenesis site" description="Complete loss of enzyme activity. No effect on penicillin binding." evidence="2">
    <original>K</original>
    <variation>R</variation>
    <location>
        <position position="213"/>
    </location>
</feature>
<feature type="mutagenesis site" description="Complete loss of activity." evidence="2">
    <original>K</original>
    <variation>X</variation>
    <location>
        <position position="213"/>
    </location>
</feature>
<feature type="turn" evidence="5">
    <location>
        <begin position="33"/>
        <end position="35"/>
    </location>
</feature>
<feature type="strand" evidence="5">
    <location>
        <begin position="46"/>
        <end position="53"/>
    </location>
</feature>
<feature type="turn" evidence="5">
    <location>
        <begin position="54"/>
        <end position="56"/>
    </location>
</feature>
<feature type="strand" evidence="5">
    <location>
        <begin position="59"/>
        <end position="64"/>
    </location>
</feature>
<feature type="helix" evidence="5">
    <location>
        <begin position="72"/>
        <end position="74"/>
    </location>
</feature>
<feature type="helix" evidence="5">
    <location>
        <begin position="75"/>
        <end position="88"/>
    </location>
</feature>
<feature type="strand" evidence="5">
    <location>
        <begin position="97"/>
        <end position="99"/>
    </location>
</feature>
<feature type="helix" evidence="5">
    <location>
        <begin position="102"/>
        <end position="104"/>
    </location>
</feature>
<feature type="helix" evidence="5">
    <location>
        <begin position="106"/>
        <end position="108"/>
    </location>
</feature>
<feature type="helix" evidence="5">
    <location>
        <begin position="110"/>
        <end position="112"/>
    </location>
</feature>
<feature type="strand" evidence="5">
    <location>
        <begin position="125"/>
        <end position="127"/>
    </location>
</feature>
<feature type="helix" evidence="5">
    <location>
        <begin position="128"/>
        <end position="136"/>
    </location>
</feature>
<feature type="helix" evidence="5">
    <location>
        <begin position="141"/>
        <end position="152"/>
    </location>
</feature>
<feature type="helix" evidence="5">
    <location>
        <begin position="155"/>
        <end position="168"/>
    </location>
</feature>
<feature type="strand" evidence="5">
    <location>
        <begin position="179"/>
        <end position="183"/>
    </location>
</feature>
<feature type="helix" evidence="5">
    <location>
        <begin position="191"/>
        <end position="204"/>
    </location>
</feature>
<feature type="helix" evidence="5">
    <location>
        <begin position="206"/>
        <end position="209"/>
    </location>
</feature>
<feature type="helix" evidence="5">
    <location>
        <begin position="210"/>
        <end position="213"/>
    </location>
</feature>
<feature type="strand" evidence="5">
    <location>
        <begin position="216"/>
        <end position="219"/>
    </location>
</feature>
<feature type="strand" evidence="5">
    <location>
        <begin position="222"/>
        <end position="225"/>
    </location>
</feature>
<feature type="helix" evidence="5">
    <location>
        <begin position="229"/>
        <end position="232"/>
    </location>
</feature>
<feature type="strand" evidence="5">
    <location>
        <begin position="236"/>
        <end position="246"/>
    </location>
</feature>
<feature type="turn" evidence="5">
    <location>
        <begin position="247"/>
        <end position="249"/>
    </location>
</feature>
<feature type="strand" evidence="5">
    <location>
        <begin position="250"/>
        <end position="259"/>
    </location>
</feature>
<feature type="strand" evidence="5">
    <location>
        <begin position="262"/>
        <end position="271"/>
    </location>
</feature>
<feature type="helix" evidence="5">
    <location>
        <begin position="274"/>
        <end position="276"/>
    </location>
</feature>
<feature type="helix" evidence="5">
    <location>
        <begin position="279"/>
        <end position="291"/>
    </location>
</feature>
<feature type="strand" evidence="5">
    <location>
        <begin position="292"/>
        <end position="298"/>
    </location>
</feature>
<feature type="strand" evidence="5">
    <location>
        <begin position="304"/>
        <end position="320"/>
    </location>
</feature>
<feature type="strand" evidence="5">
    <location>
        <begin position="325"/>
        <end position="330"/>
    </location>
</feature>
<feature type="helix" evidence="5">
    <location>
        <begin position="334"/>
        <end position="336"/>
    </location>
</feature>
<feature type="strand" evidence="5">
    <location>
        <begin position="338"/>
        <end position="350"/>
    </location>
</feature>
<feature type="strand" evidence="5">
    <location>
        <begin position="357"/>
        <end position="365"/>
    </location>
</feature>
<feature type="strand" evidence="5">
    <location>
        <begin position="368"/>
        <end position="379"/>
    </location>
</feature>
<feature type="helix" evidence="6">
    <location>
        <begin position="389"/>
        <end position="396"/>
    </location>
</feature>
<reference key="1">
    <citation type="submission" date="1984-04" db="EMBL/GenBank/DDBJ databases">
        <authorList>
            <person name="Broome-Smith J.K."/>
        </authorList>
    </citation>
    <scope>NUCLEOTIDE SEQUENCE [GENOMIC DNA]</scope>
</reference>
<reference key="2">
    <citation type="journal article" date="1988" name="Nucleic Acids Res.">
        <title>Nucleotide sequences of the penicillin-binding protein 5 and 6 genes of Escherichia coli.</title>
        <authorList>
            <person name="Broome-Smith J.K."/>
            <person name="Ioannidis I."/>
            <person name="Edelman A."/>
            <person name="Spratt B.G."/>
        </authorList>
    </citation>
    <scope>NUCLEOTIDE SEQUENCE [GENOMIC DNA]</scope>
    <source>
        <strain>K12</strain>
    </source>
</reference>
<reference key="3">
    <citation type="journal article" date="1996" name="DNA Res.">
        <title>A 718-kb DNA sequence of the Escherichia coli K-12 genome corresponding to the 12.7-28.0 min region on the linkage map.</title>
        <authorList>
            <person name="Oshima T."/>
            <person name="Aiba H."/>
            <person name="Baba T."/>
            <person name="Fujita K."/>
            <person name="Hayashi K."/>
            <person name="Honjo A."/>
            <person name="Ikemoto K."/>
            <person name="Inada T."/>
            <person name="Itoh T."/>
            <person name="Kajihara M."/>
            <person name="Kanai K."/>
            <person name="Kashimoto K."/>
            <person name="Kimura S."/>
            <person name="Kitagawa M."/>
            <person name="Makino K."/>
            <person name="Masuda S."/>
            <person name="Miki T."/>
            <person name="Mizobuchi K."/>
            <person name="Mori H."/>
            <person name="Motomura K."/>
            <person name="Nakamura Y."/>
            <person name="Nashimoto H."/>
            <person name="Nishio Y."/>
            <person name="Saito N."/>
            <person name="Sampei G."/>
            <person name="Seki Y."/>
            <person name="Tagami H."/>
            <person name="Takemoto K."/>
            <person name="Wada C."/>
            <person name="Yamamoto Y."/>
            <person name="Yano M."/>
            <person name="Horiuchi T."/>
        </authorList>
    </citation>
    <scope>NUCLEOTIDE SEQUENCE [LARGE SCALE GENOMIC DNA]</scope>
    <source>
        <strain>K12 / W3110 / ATCC 27325 / DSM 5911</strain>
    </source>
</reference>
<reference key="4">
    <citation type="submission" date="1997-01" db="EMBL/GenBank/DDBJ databases">
        <title>Sequence of minutes 4-25 of Escherichia coli.</title>
        <authorList>
            <person name="Chung E."/>
            <person name="Allen E."/>
            <person name="Araujo R."/>
            <person name="Aparicio A.M."/>
            <person name="Davis K."/>
            <person name="Duncan M."/>
            <person name="Federspiel N."/>
            <person name="Hyman R."/>
            <person name="Kalman S."/>
            <person name="Komp C."/>
            <person name="Kurdi O."/>
            <person name="Lew H."/>
            <person name="Lin D."/>
            <person name="Namath A."/>
            <person name="Oefner P."/>
            <person name="Roberts D."/>
            <person name="Schramm S."/>
            <person name="Davis R.W."/>
        </authorList>
    </citation>
    <scope>NUCLEOTIDE SEQUENCE [LARGE SCALE GENOMIC DNA]</scope>
    <source>
        <strain>K12 / MG1655 / ATCC 47076</strain>
    </source>
</reference>
<reference key="5">
    <citation type="journal article" date="1997" name="Science">
        <title>The complete genome sequence of Escherichia coli K-12.</title>
        <authorList>
            <person name="Blattner F.R."/>
            <person name="Plunkett G. III"/>
            <person name="Bloch C.A."/>
            <person name="Perna N.T."/>
            <person name="Burland V."/>
            <person name="Riley M."/>
            <person name="Collado-Vides J."/>
            <person name="Glasner J.D."/>
            <person name="Rode C.K."/>
            <person name="Mayhew G.F."/>
            <person name="Gregor J."/>
            <person name="Davis N.W."/>
            <person name="Kirkpatrick H.A."/>
            <person name="Goeden M.A."/>
            <person name="Rose D.J."/>
            <person name="Mau B."/>
            <person name="Shao Y."/>
        </authorList>
    </citation>
    <scope>NUCLEOTIDE SEQUENCE [LARGE SCALE GENOMIC DNA]</scope>
    <source>
        <strain>K12 / MG1655 / ATCC 47076</strain>
    </source>
</reference>
<reference key="6">
    <citation type="journal article" date="2006" name="Mol. Syst. Biol.">
        <title>Highly accurate genome sequences of Escherichia coli K-12 strains MG1655 and W3110.</title>
        <authorList>
            <person name="Hayashi K."/>
            <person name="Morooka N."/>
            <person name="Yamamoto Y."/>
            <person name="Fujita K."/>
            <person name="Isono K."/>
            <person name="Choi S."/>
            <person name="Ohtsubo E."/>
            <person name="Baba T."/>
            <person name="Wanner B.L."/>
            <person name="Mori H."/>
            <person name="Horiuchi T."/>
        </authorList>
    </citation>
    <scope>NUCLEOTIDE SEQUENCE [LARGE SCALE GENOMIC DNA]</scope>
    <source>
        <strain>K12 / W3110 / ATCC 27325 / DSM 5911</strain>
    </source>
</reference>
<reference key="7">
    <citation type="journal article" date="1984" name="FEBS Lett.">
        <title>An amino acid substitution that blocks the deacylation step in the enzyme mechanism of penicillin-binding protein 5 of Escherichia coli.</title>
        <authorList>
            <person name="Broome-Smith J.K."/>
            <person name="Spratt B.G."/>
        </authorList>
    </citation>
    <scope>NUCLEOTIDE SEQUENCE [GENOMIC DNA] OF 108-336</scope>
    <scope>MUTANT DACA11191</scope>
</reference>
<reference key="8">
    <citation type="journal article" date="1987" name="J. Bacteriol.">
        <title>Genes encoding two lipoproteins in the leuS-dacA region of the Escherichia coli chromosome.</title>
        <authorList>
            <person name="Takase I."/>
            <person name="Ishino F."/>
            <person name="Wachi M."/>
            <person name="Kamata H."/>
            <person name="Doi M."/>
            <person name="Asoh S."/>
            <person name="Matsuzawa H."/>
            <person name="Ohta T."/>
            <person name="Matsuhashi M."/>
        </authorList>
    </citation>
    <scope>NUCLEOTIDE SEQUENCE [GENOMIC DNA] OF 1-39</scope>
    <source>
        <strain>K12</strain>
    </source>
</reference>
<reference key="9">
    <citation type="journal article" date="1982" name="FEBS Lett.">
        <title>Amino acid sequence homologies between Escherichia coli penicillin-binding protein 5 and class A beta-lactamases.</title>
        <authorList>
            <person name="Waxman D.J."/>
            <person name="Amanuma H."/>
            <person name="Strominger J.L."/>
        </authorList>
    </citation>
    <scope>PROTEIN SEQUENCE OF 30-57</scope>
</reference>
<reference key="10">
    <citation type="journal article" date="1992" name="J. Biol. Chem.">
        <title>Substitution of lysine 213 with arginine in penicillin-binding protein 5 of Escherichia coli abolishes D-alanine carboxypeptidase activity without affecting penicillin binding.</title>
        <authorList>
            <person name="Malhotra K.T."/>
            <person name="Nicholas R.A."/>
        </authorList>
    </citation>
    <scope>MUTAGENESIS OF LYS-213</scope>
</reference>
<reference key="11">
    <citation type="journal article" date="1993" name="Biochem. J.">
        <title>Domain organization of penicillin-binding protein 5 from Escherichia coli analysed by C-terminal truncation.</title>
        <authorList>
            <person name="van der Linden M.P.G."/>
            <person name="de Haan L."/>
            <person name="Keck W."/>
        </authorList>
    </citation>
    <scope>DOMAINS</scope>
</reference>
<reference key="12">
    <citation type="journal article" date="1997" name="Electrophoresis">
        <title>Escherichia coli proteome analysis using the gene-protein database.</title>
        <authorList>
            <person name="VanBogelen R.A."/>
            <person name="Abshire K.Z."/>
            <person name="Moldover B."/>
            <person name="Olson E.R."/>
            <person name="Neidhardt F.C."/>
        </authorList>
    </citation>
    <scope>IDENTIFICATION BY 2D-GEL</scope>
</reference>
<reference key="13">
    <citation type="journal article" date="2001" name="J. Biol. Chem.">
        <title>Crystal structure of a deacylation-defective mutant of penicillin-binding protein 5 at 2.3-A resolution.</title>
        <authorList>
            <person name="Davies C."/>
            <person name="White S.W."/>
            <person name="Nicholas R.A."/>
        </authorList>
    </citation>
    <scope>X-RAY CRYSTALLOGRAPHY (2.3 ANGSTROMS) OF 30-386 OF MUTANT ASP-134</scope>
</reference>
<reference key="14">
    <citation type="journal article" date="2003" name="J. Biol. Chem.">
        <title>Crystal structure of wild-type penicillin-binding protein 5 from Escherichia coli. Implications for deacylation of the acyl-enzyme complex.</title>
        <authorList>
            <person name="Nicholas R.A."/>
            <person name="Krings S."/>
            <person name="Tomberg J."/>
            <person name="Nicola G."/>
            <person name="Davies C."/>
        </authorList>
    </citation>
    <scope>X-RAY CRYSTALLOGRAPHY (1.85 ANGSTROMS) OF 30-386 OF WILD-TYPE AND MUTANT ASP-134</scope>
    <scope>MUTAGENESIS OF 101-GLY--LYS-121</scope>
</reference>
<reference key="15">
    <citation type="journal article" date="2005" name="Biochemistry">
        <title>Crystal structure of Escherichia coli penicillin-binding protein 5 bound to a tripeptide boronic acid inhibitor: a role for Ser-110 in deacylation.</title>
        <authorList>
            <person name="Nicola G."/>
            <person name="Peddi S."/>
            <person name="Stefanova M."/>
            <person name="Nicholas R.A."/>
            <person name="Gutheil W.G."/>
            <person name="Davies C."/>
        </authorList>
    </citation>
    <scope>X-RAY CRYSTALLOGRAPHY (1.6 ANGSTROMS) OF 30-386 IN COMPLEX WITH SUBSTRATE ANALOG</scope>
    <scope>REACTION MECHANISM</scope>
</reference>
<evidence type="ECO:0000269" key="1">
    <source>
    </source>
</evidence>
<evidence type="ECO:0000269" key="2">
    <source>
    </source>
</evidence>
<evidence type="ECO:0000269" key="3">
    <source>
    </source>
</evidence>
<evidence type="ECO:0000305" key="4"/>
<evidence type="ECO:0007829" key="5">
    <source>
        <dbReference type="PDB" id="3MZF"/>
    </source>
</evidence>
<evidence type="ECO:0007829" key="6">
    <source>
        <dbReference type="PDB" id="6NTZ"/>
    </source>
</evidence>
<organism>
    <name type="scientific">Escherichia coli (strain K12)</name>
    <dbReference type="NCBI Taxonomy" id="83333"/>
    <lineage>
        <taxon>Bacteria</taxon>
        <taxon>Pseudomonadati</taxon>
        <taxon>Pseudomonadota</taxon>
        <taxon>Gammaproteobacteria</taxon>
        <taxon>Enterobacterales</taxon>
        <taxon>Enterobacteriaceae</taxon>
        <taxon>Escherichia</taxon>
    </lineage>
</organism>
<comment type="function">
    <text>Removes C-terminal D-alanyl residues from sugar-peptide cell wall precursors.</text>
</comment>
<comment type="catalytic activity">
    <reaction>
        <text>Preferential cleavage: (Ac)2-L-Lys-D-Ala-|-D-Ala. Also transpeptidation of peptidyl-alanyl moieties that are N-acyl substituents of D-alanine.</text>
        <dbReference type="EC" id="3.4.16.4"/>
    </reaction>
</comment>
<comment type="catalytic activity">
    <reaction>
        <text>a beta-lactam + H2O = a substituted beta-amino acid</text>
        <dbReference type="Rhea" id="RHEA:20401"/>
        <dbReference type="ChEBI" id="CHEBI:15377"/>
        <dbReference type="ChEBI" id="CHEBI:35627"/>
        <dbReference type="ChEBI" id="CHEBI:140347"/>
        <dbReference type="EC" id="3.5.2.6"/>
    </reaction>
</comment>
<comment type="pathway">
    <text>Cell wall biogenesis; peptidoglycan biosynthesis.</text>
</comment>
<comment type="subcellular location">
    <subcellularLocation>
        <location>Cell inner membrane</location>
        <topology>Peripheral membrane protein</topology>
        <orientation>Cytoplasmic side</orientation>
    </subcellularLocation>
    <text>N-terminal lies in the periplasmic space.</text>
</comment>
<comment type="similarity">
    <text evidence="4">Belongs to the peptidase S11 family.</text>
</comment>
<comment type="sequence caution" evidence="4">
    <conflict type="erroneous initiation">
        <sequence resource="EMBL-CDS" id="AAB40832"/>
    </conflict>
    <text>Extended N-terminus.</text>
</comment>
<dbReference type="EC" id="3.4.16.4"/>
<dbReference type="EC" id="3.5.2.6"/>
<dbReference type="EMBL" id="X06479">
    <property type="protein sequence ID" value="CAA29774.1"/>
    <property type="molecule type" value="Genomic_DNA"/>
</dbReference>
<dbReference type="EMBL" id="M18276">
    <property type="protein sequence ID" value="AAA24553.1"/>
    <property type="molecule type" value="Genomic_DNA"/>
</dbReference>
<dbReference type="EMBL" id="U82598">
    <property type="protein sequence ID" value="AAB40832.1"/>
    <property type="status" value="ALT_INIT"/>
    <property type="molecule type" value="Genomic_DNA"/>
</dbReference>
<dbReference type="EMBL" id="U00096">
    <property type="protein sequence ID" value="AAC73733.1"/>
    <property type="molecule type" value="Genomic_DNA"/>
</dbReference>
<dbReference type="EMBL" id="AP009048">
    <property type="protein sequence ID" value="BAA35275.1"/>
    <property type="molecule type" value="Genomic_DNA"/>
</dbReference>
<dbReference type="EMBL" id="L07636">
    <property type="protein sequence ID" value="AAA66340.1"/>
    <property type="molecule type" value="Genomic_DNA"/>
</dbReference>
<dbReference type="PIR" id="A28536">
    <property type="entry name" value="ZPECP5"/>
</dbReference>
<dbReference type="RefSeq" id="NP_415165.1">
    <property type="nucleotide sequence ID" value="NC_000913.3"/>
</dbReference>
<dbReference type="RefSeq" id="WP_001092082.1">
    <property type="nucleotide sequence ID" value="NZ_STEB01000031.1"/>
</dbReference>
<dbReference type="PDB" id="1HD8">
    <property type="method" value="X-ray"/>
    <property type="resolution" value="2.30 A"/>
    <property type="chains" value="A=30-386"/>
</dbReference>
<dbReference type="PDB" id="1NJ4">
    <property type="method" value="X-ray"/>
    <property type="resolution" value="1.90 A"/>
    <property type="chains" value="A=30-392"/>
</dbReference>
<dbReference type="PDB" id="1NZO">
    <property type="method" value="X-ray"/>
    <property type="resolution" value="1.85 A"/>
    <property type="chains" value="A=30-392"/>
</dbReference>
<dbReference type="PDB" id="1NZU">
    <property type="method" value="X-ray"/>
    <property type="resolution" value="2.00 A"/>
    <property type="chains" value="A=30-392"/>
</dbReference>
<dbReference type="PDB" id="1SDN">
    <property type="method" value="X-ray"/>
    <property type="resolution" value="2.50 A"/>
    <property type="chains" value="A=30-392"/>
</dbReference>
<dbReference type="PDB" id="1Z6F">
    <property type="method" value="X-ray"/>
    <property type="resolution" value="1.60 A"/>
    <property type="chains" value="A=30-392"/>
</dbReference>
<dbReference type="PDB" id="3BEB">
    <property type="method" value="X-ray"/>
    <property type="resolution" value="2.00 A"/>
    <property type="chains" value="A=30-386"/>
</dbReference>
<dbReference type="PDB" id="3BEC">
    <property type="method" value="X-ray"/>
    <property type="resolution" value="1.60 A"/>
    <property type="chains" value="A=30-386"/>
</dbReference>
<dbReference type="PDB" id="3MZD">
    <property type="method" value="X-ray"/>
    <property type="resolution" value="1.90 A"/>
    <property type="chains" value="A=30-386"/>
</dbReference>
<dbReference type="PDB" id="3MZE">
    <property type="method" value="X-ray"/>
    <property type="resolution" value="2.10 A"/>
    <property type="chains" value="A=30-386"/>
</dbReference>
<dbReference type="PDB" id="3MZF">
    <property type="method" value="X-ray"/>
    <property type="resolution" value="1.50 A"/>
    <property type="chains" value="A=30-386"/>
</dbReference>
<dbReference type="PDB" id="5J8X">
    <property type="method" value="X-ray"/>
    <property type="resolution" value="2.53 A"/>
    <property type="chains" value="A=30-392"/>
</dbReference>
<dbReference type="PDB" id="6NTZ">
    <property type="method" value="X-ray"/>
    <property type="resolution" value="2.20 A"/>
    <property type="chains" value="A=1-403"/>
</dbReference>
<dbReference type="PDBsum" id="1HD8"/>
<dbReference type="PDBsum" id="1NJ4"/>
<dbReference type="PDBsum" id="1NZO"/>
<dbReference type="PDBsum" id="1NZU"/>
<dbReference type="PDBsum" id="1SDN"/>
<dbReference type="PDBsum" id="1Z6F"/>
<dbReference type="PDBsum" id="3BEB"/>
<dbReference type="PDBsum" id="3BEC"/>
<dbReference type="PDBsum" id="3MZD"/>
<dbReference type="PDBsum" id="3MZE"/>
<dbReference type="PDBsum" id="3MZF"/>
<dbReference type="PDBsum" id="5J8X"/>
<dbReference type="PDBsum" id="6NTZ"/>
<dbReference type="SMR" id="P0AEB2"/>
<dbReference type="BioGRID" id="4260698">
    <property type="interactions" value="273"/>
</dbReference>
<dbReference type="DIP" id="DIP-47947N"/>
<dbReference type="FunCoup" id="P0AEB2">
    <property type="interactions" value="502"/>
</dbReference>
<dbReference type="IntAct" id="P0AEB2">
    <property type="interactions" value="9"/>
</dbReference>
<dbReference type="STRING" id="511145.b0632"/>
<dbReference type="ChEMBL" id="CHEMBL2354204"/>
<dbReference type="DrugBank" id="DB01602">
    <property type="generic name" value="Bacampicillin"/>
</dbReference>
<dbReference type="DrugBank" id="DB04647">
    <property type="generic name" value="BOC-GAMMA-D-GLU-L-LYS(CBZ)-D-BOROALA"/>
</dbReference>
<dbReference type="DrugBank" id="DB00578">
    <property type="generic name" value="Carbenicillin"/>
</dbReference>
<dbReference type="DrugBank" id="DB09319">
    <property type="generic name" value="Carindacillin"/>
</dbReference>
<dbReference type="DrugBank" id="DB00671">
    <property type="generic name" value="Cefixime"/>
</dbReference>
<dbReference type="DrugBank" id="DB00274">
    <property type="generic name" value="Cefmetazole"/>
</dbReference>
<dbReference type="DrugBank" id="DB01329">
    <property type="generic name" value="Cefoperazone"/>
</dbReference>
<dbReference type="DrugBank" id="DB01331">
    <property type="generic name" value="Cefoxitin"/>
</dbReference>
<dbReference type="DrugBank" id="DB06590">
    <property type="generic name" value="Ceftaroline fosamil"/>
</dbReference>
<dbReference type="DrugBank" id="DB09050">
    <property type="generic name" value="Ceftolozane"/>
</dbReference>
<dbReference type="DrugBank" id="DB01147">
    <property type="generic name" value="Cloxacillin"/>
</dbReference>
<dbReference type="DrugBank" id="DB01000">
    <property type="generic name" value="Cyclacillin"/>
</dbReference>
<dbReference type="DrugBank" id="DB09320">
    <property type="generic name" value="Procaine benzylpenicillin"/>
</dbReference>
<dbReference type="DrugBank" id="DB16335">
    <property type="generic name" value="Sulopenem etzadroxil"/>
</dbReference>
<dbReference type="DrugCentral" id="P0AEB2"/>
<dbReference type="MEROPS" id="S11.008"/>
<dbReference type="jPOST" id="P0AEB2"/>
<dbReference type="PaxDb" id="511145-b0632"/>
<dbReference type="EnsemblBacteria" id="AAC73733">
    <property type="protein sequence ID" value="AAC73733"/>
    <property type="gene ID" value="b0632"/>
</dbReference>
<dbReference type="GeneID" id="93776850"/>
<dbReference type="GeneID" id="945222"/>
<dbReference type="KEGG" id="ecj:JW0627"/>
<dbReference type="KEGG" id="eco:b0632"/>
<dbReference type="KEGG" id="ecoc:C3026_03160"/>
<dbReference type="PATRIC" id="fig|511145.12.peg.662"/>
<dbReference type="EchoBASE" id="EB0197"/>
<dbReference type="eggNOG" id="COG1686">
    <property type="taxonomic scope" value="Bacteria"/>
</dbReference>
<dbReference type="HOGENOM" id="CLU_027070_8_1_6"/>
<dbReference type="InParanoid" id="P0AEB2"/>
<dbReference type="OMA" id="QNTHFQT"/>
<dbReference type="OrthoDB" id="9795979at2"/>
<dbReference type="PhylomeDB" id="P0AEB2"/>
<dbReference type="BioCyc" id="EcoCyc:EG10201-MONOMER"/>
<dbReference type="BioCyc" id="MetaCyc:EG10201-MONOMER"/>
<dbReference type="BRENDA" id="3.4.16.4">
    <property type="organism ID" value="2026"/>
</dbReference>
<dbReference type="UniPathway" id="UPA00219"/>
<dbReference type="EvolutionaryTrace" id="P0AEB2"/>
<dbReference type="PRO" id="PR:P0AEB2"/>
<dbReference type="Proteomes" id="UP000000625">
    <property type="component" value="Chromosome"/>
</dbReference>
<dbReference type="GO" id="GO:0030288">
    <property type="term" value="C:outer membrane-bounded periplasmic space"/>
    <property type="evidence" value="ECO:0000314"/>
    <property type="project" value="EcoCyc"/>
</dbReference>
<dbReference type="GO" id="GO:0005886">
    <property type="term" value="C:plasma membrane"/>
    <property type="evidence" value="ECO:0000314"/>
    <property type="project" value="EcoCyc"/>
</dbReference>
<dbReference type="GO" id="GO:0008800">
    <property type="term" value="F:beta-lactamase activity"/>
    <property type="evidence" value="ECO:0000314"/>
    <property type="project" value="EcoCyc"/>
</dbReference>
<dbReference type="GO" id="GO:0004180">
    <property type="term" value="F:carboxypeptidase activity"/>
    <property type="evidence" value="ECO:0000314"/>
    <property type="project" value="EcoCyc"/>
</dbReference>
<dbReference type="GO" id="GO:0008658">
    <property type="term" value="F:penicillin binding"/>
    <property type="evidence" value="ECO:0000314"/>
    <property type="project" value="EcoCyc"/>
</dbReference>
<dbReference type="GO" id="GO:0042803">
    <property type="term" value="F:protein homodimerization activity"/>
    <property type="evidence" value="ECO:0000314"/>
    <property type="project" value="EcoCyc"/>
</dbReference>
<dbReference type="GO" id="GO:0009002">
    <property type="term" value="F:serine-type D-Ala-D-Ala carboxypeptidase activity"/>
    <property type="evidence" value="ECO:0000314"/>
    <property type="project" value="CACAO"/>
</dbReference>
<dbReference type="GO" id="GO:0051301">
    <property type="term" value="P:cell division"/>
    <property type="evidence" value="ECO:0000269"/>
    <property type="project" value="EcoCyc"/>
</dbReference>
<dbReference type="GO" id="GO:0071555">
    <property type="term" value="P:cell wall organization"/>
    <property type="evidence" value="ECO:0007669"/>
    <property type="project" value="UniProtKB-KW"/>
</dbReference>
<dbReference type="GO" id="GO:0009252">
    <property type="term" value="P:peptidoglycan biosynthetic process"/>
    <property type="evidence" value="ECO:0007669"/>
    <property type="project" value="UniProtKB-UniPathway"/>
</dbReference>
<dbReference type="GO" id="GO:0000270">
    <property type="term" value="P:peptidoglycan metabolic process"/>
    <property type="evidence" value="ECO:0000314"/>
    <property type="project" value="EcoCyc"/>
</dbReference>
<dbReference type="GO" id="GO:0006508">
    <property type="term" value="P:proteolysis"/>
    <property type="evidence" value="ECO:0007669"/>
    <property type="project" value="UniProtKB-KW"/>
</dbReference>
<dbReference type="GO" id="GO:0008360">
    <property type="term" value="P:regulation of cell shape"/>
    <property type="evidence" value="ECO:0000314"/>
    <property type="project" value="EcoCyc"/>
</dbReference>
<dbReference type="FunFam" id="2.60.410.10:FF:000001">
    <property type="entry name" value="D-alanyl-D-alanine carboxypeptidase dacA"/>
    <property type="match status" value="1"/>
</dbReference>
<dbReference type="FunFam" id="3.40.710.10:FF:000001">
    <property type="entry name" value="D-alanyl-D-alanine serine-type carboxypeptidase"/>
    <property type="match status" value="1"/>
</dbReference>
<dbReference type="Gene3D" id="2.60.410.10">
    <property type="entry name" value="D-Ala-D-Ala carboxypeptidase, C-terminal domain"/>
    <property type="match status" value="1"/>
</dbReference>
<dbReference type="Gene3D" id="3.40.710.10">
    <property type="entry name" value="DD-peptidase/beta-lactamase superfamily"/>
    <property type="match status" value="1"/>
</dbReference>
<dbReference type="InterPro" id="IPR012338">
    <property type="entry name" value="Beta-lactam/transpept-like"/>
</dbReference>
<dbReference type="InterPro" id="IPR015956">
    <property type="entry name" value="Peniciliin-bd_prot_C_sf"/>
</dbReference>
<dbReference type="InterPro" id="IPR018044">
    <property type="entry name" value="Peptidase_S11"/>
</dbReference>
<dbReference type="InterPro" id="IPR012907">
    <property type="entry name" value="Peptidase_S11_C"/>
</dbReference>
<dbReference type="InterPro" id="IPR037167">
    <property type="entry name" value="Peptidase_S11_C_sf"/>
</dbReference>
<dbReference type="InterPro" id="IPR001967">
    <property type="entry name" value="Peptidase_S11_N"/>
</dbReference>
<dbReference type="NCBIfam" id="NF008059">
    <property type="entry name" value="PRK10793.1"/>
    <property type="match status" value="1"/>
</dbReference>
<dbReference type="PANTHER" id="PTHR21581">
    <property type="entry name" value="D-ALANYL-D-ALANINE CARBOXYPEPTIDASE"/>
    <property type="match status" value="1"/>
</dbReference>
<dbReference type="PANTHER" id="PTHR21581:SF27">
    <property type="entry name" value="D-ALANYL-D-ALANINE CARBOXYPEPTIDASE DACA"/>
    <property type="match status" value="1"/>
</dbReference>
<dbReference type="Pfam" id="PF07943">
    <property type="entry name" value="PBP5_C"/>
    <property type="match status" value="1"/>
</dbReference>
<dbReference type="Pfam" id="PF00768">
    <property type="entry name" value="Peptidase_S11"/>
    <property type="match status" value="1"/>
</dbReference>
<dbReference type="PRINTS" id="PR00725">
    <property type="entry name" value="DADACBPTASE1"/>
</dbReference>
<dbReference type="SMART" id="SM00936">
    <property type="entry name" value="PBP5_C"/>
    <property type="match status" value="1"/>
</dbReference>
<dbReference type="SUPFAM" id="SSF56601">
    <property type="entry name" value="beta-lactamase/transpeptidase-like"/>
    <property type="match status" value="1"/>
</dbReference>
<dbReference type="SUPFAM" id="SSF69189">
    <property type="entry name" value="Penicillin-binding protein associated domain"/>
    <property type="match status" value="1"/>
</dbReference>
<keyword id="KW-0002">3D-structure</keyword>
<keyword id="KW-0121">Carboxypeptidase</keyword>
<keyword id="KW-0997">Cell inner membrane</keyword>
<keyword id="KW-1003">Cell membrane</keyword>
<keyword id="KW-0133">Cell shape</keyword>
<keyword id="KW-0961">Cell wall biogenesis/degradation</keyword>
<keyword id="KW-0903">Direct protein sequencing</keyword>
<keyword id="KW-0378">Hydrolase</keyword>
<keyword id="KW-0472">Membrane</keyword>
<keyword id="KW-0573">Peptidoglycan synthesis</keyword>
<keyword id="KW-0645">Protease</keyword>
<keyword id="KW-1185">Reference proteome</keyword>
<keyword id="KW-0732">Signal</keyword>
<gene>
    <name type="primary">dacA</name>
    <name type="synonym">pfv</name>
    <name type="ordered locus">b0632</name>
    <name type="ordered locus">JW0627</name>
</gene>